<dbReference type="EMBL" id="EF380353">
    <property type="protein sequence ID" value="ABR01470.1"/>
    <property type="molecule type" value="Genomic_DNA"/>
</dbReference>
<dbReference type="RefSeq" id="YP_001294393.1">
    <property type="nucleotide sequence ID" value="NC_009601.1"/>
</dbReference>
<dbReference type="SMR" id="A6MMP8"/>
<dbReference type="GeneID" id="5236624"/>
<dbReference type="GO" id="GO:0009507">
    <property type="term" value="C:chloroplast"/>
    <property type="evidence" value="ECO:0007669"/>
    <property type="project" value="UniProtKB-SubCell"/>
</dbReference>
<dbReference type="GO" id="GO:0005763">
    <property type="term" value="C:mitochondrial small ribosomal subunit"/>
    <property type="evidence" value="ECO:0007669"/>
    <property type="project" value="TreeGrafter"/>
</dbReference>
<dbReference type="GO" id="GO:0019843">
    <property type="term" value="F:rRNA binding"/>
    <property type="evidence" value="ECO:0007669"/>
    <property type="project" value="UniProtKB-UniRule"/>
</dbReference>
<dbReference type="GO" id="GO:0003735">
    <property type="term" value="F:structural constituent of ribosome"/>
    <property type="evidence" value="ECO:0007669"/>
    <property type="project" value="InterPro"/>
</dbReference>
<dbReference type="GO" id="GO:0000028">
    <property type="term" value="P:ribosomal small subunit assembly"/>
    <property type="evidence" value="ECO:0007669"/>
    <property type="project" value="TreeGrafter"/>
</dbReference>
<dbReference type="GO" id="GO:0006412">
    <property type="term" value="P:translation"/>
    <property type="evidence" value="ECO:0007669"/>
    <property type="project" value="UniProtKB-UniRule"/>
</dbReference>
<dbReference type="FunFam" id="3.30.860.10:FF:000001">
    <property type="entry name" value="30S ribosomal protein S19"/>
    <property type="match status" value="1"/>
</dbReference>
<dbReference type="Gene3D" id="3.30.860.10">
    <property type="entry name" value="30s Ribosomal Protein S19, Chain A"/>
    <property type="match status" value="1"/>
</dbReference>
<dbReference type="HAMAP" id="MF_00531">
    <property type="entry name" value="Ribosomal_uS19"/>
    <property type="match status" value="1"/>
</dbReference>
<dbReference type="InterPro" id="IPR002222">
    <property type="entry name" value="Ribosomal_uS19"/>
</dbReference>
<dbReference type="InterPro" id="IPR005732">
    <property type="entry name" value="Ribosomal_uS19_bac-type"/>
</dbReference>
<dbReference type="InterPro" id="IPR020934">
    <property type="entry name" value="Ribosomal_uS19_CS"/>
</dbReference>
<dbReference type="InterPro" id="IPR023575">
    <property type="entry name" value="Ribosomal_uS19_SF"/>
</dbReference>
<dbReference type="NCBIfam" id="TIGR01050">
    <property type="entry name" value="rpsS_bact"/>
    <property type="match status" value="1"/>
</dbReference>
<dbReference type="PANTHER" id="PTHR11880">
    <property type="entry name" value="RIBOSOMAL PROTEIN S19P FAMILY MEMBER"/>
    <property type="match status" value="1"/>
</dbReference>
<dbReference type="PANTHER" id="PTHR11880:SF8">
    <property type="entry name" value="SMALL RIBOSOMAL SUBUNIT PROTEIN US19M"/>
    <property type="match status" value="1"/>
</dbReference>
<dbReference type="Pfam" id="PF00203">
    <property type="entry name" value="Ribosomal_S19"/>
    <property type="match status" value="1"/>
</dbReference>
<dbReference type="PIRSF" id="PIRSF002144">
    <property type="entry name" value="Ribosomal_S19"/>
    <property type="match status" value="1"/>
</dbReference>
<dbReference type="PRINTS" id="PR00975">
    <property type="entry name" value="RIBOSOMALS19"/>
</dbReference>
<dbReference type="SUPFAM" id="SSF54570">
    <property type="entry name" value="Ribosomal protein S19"/>
    <property type="match status" value="1"/>
</dbReference>
<dbReference type="PROSITE" id="PS00323">
    <property type="entry name" value="RIBOSOMAL_S19"/>
    <property type="match status" value="1"/>
</dbReference>
<feature type="chain" id="PRO_0000354351" description="Small ribosomal subunit protein uS19c">
    <location>
        <begin position="1"/>
        <end position="92"/>
    </location>
</feature>
<gene>
    <name evidence="1" type="primary">rps19</name>
</gene>
<organism>
    <name type="scientific">Dioscorea elephantipes</name>
    <name type="common">Elephant's foot yam</name>
    <name type="synonym">Testudinaria elephantipes</name>
    <dbReference type="NCBI Taxonomy" id="145284"/>
    <lineage>
        <taxon>Eukaryota</taxon>
        <taxon>Viridiplantae</taxon>
        <taxon>Streptophyta</taxon>
        <taxon>Embryophyta</taxon>
        <taxon>Tracheophyta</taxon>
        <taxon>Spermatophyta</taxon>
        <taxon>Magnoliopsida</taxon>
        <taxon>Liliopsida</taxon>
        <taxon>Dioscoreales</taxon>
        <taxon>Dioscoreaceae</taxon>
        <taxon>Dioscorea</taxon>
    </lineage>
</organism>
<protein>
    <recommendedName>
        <fullName evidence="1">Small ribosomal subunit protein uS19c</fullName>
    </recommendedName>
    <alternativeName>
        <fullName evidence="2">30S ribosomal protein S19, chloroplastic</fullName>
    </alternativeName>
</protein>
<keyword id="KW-0150">Chloroplast</keyword>
<keyword id="KW-0934">Plastid</keyword>
<keyword id="KW-0687">Ribonucleoprotein</keyword>
<keyword id="KW-0689">Ribosomal protein</keyword>
<keyword id="KW-0694">RNA-binding</keyword>
<keyword id="KW-0699">rRNA-binding</keyword>
<accession>A6MMP8</accession>
<evidence type="ECO:0000255" key="1">
    <source>
        <dbReference type="HAMAP-Rule" id="MF_00531"/>
    </source>
</evidence>
<evidence type="ECO:0000305" key="2"/>
<reference key="1">
    <citation type="journal article" date="2007" name="Mol. Phylogenet. Evol.">
        <title>Phylogenetic and evolutionary implications of complete chloroplast genome sequences of four early-diverging angiosperms: Buxus (Buxaceae), Chloranthus (Chloranthaceae), Dioscorea (Dioscoreaceae), and Illicium (Schisandraceae).</title>
        <authorList>
            <person name="Hansen D.R."/>
            <person name="Dastidar S.G."/>
            <person name="Cai Z."/>
            <person name="Penaflor C."/>
            <person name="Kuehl J.V."/>
            <person name="Boore J.L."/>
            <person name="Jansen R.K."/>
        </authorList>
    </citation>
    <scope>NUCLEOTIDE SEQUENCE [LARGE SCALE GENOMIC DNA]</scope>
</reference>
<name>RR19_DIOEL</name>
<geneLocation type="chloroplast"/>
<proteinExistence type="inferred from homology"/>
<sequence>MTRSLKKNPFVVDHLSGKIEKLNMREEKEIIVTWSRGSTIIPAMMGHTIAIHNGKEHFPIYITDQMVGHKLGEFSPTLTFARHTRNDNKSRR</sequence>
<comment type="function">
    <text evidence="1">Protein S19 forms a complex with S13 that binds strongly to the 16S ribosomal RNA.</text>
</comment>
<comment type="subcellular location">
    <subcellularLocation>
        <location>Plastid</location>
        <location>Chloroplast</location>
    </subcellularLocation>
</comment>
<comment type="similarity">
    <text evidence="1">Belongs to the universal ribosomal protein uS19 family.</text>
</comment>